<comment type="function">
    <text evidence="1">Allows the formation of correctly charged Asn-tRNA(Asn) or Gln-tRNA(Gln) through the transamidation of misacylated Asp-tRNA(Asn) or Glu-tRNA(Gln) in organisms which lack either or both of asparaginyl-tRNA or glutaminyl-tRNA synthetases. The reaction takes place in the presence of glutamine and ATP through an activated phospho-Asp-tRNA(Asn) or phospho-Glu-tRNA(Gln).</text>
</comment>
<comment type="catalytic activity">
    <reaction evidence="1">
        <text>L-glutamyl-tRNA(Gln) + L-glutamine + ATP + H2O = L-glutaminyl-tRNA(Gln) + L-glutamate + ADP + phosphate + H(+)</text>
        <dbReference type="Rhea" id="RHEA:17521"/>
        <dbReference type="Rhea" id="RHEA-COMP:9681"/>
        <dbReference type="Rhea" id="RHEA-COMP:9684"/>
        <dbReference type="ChEBI" id="CHEBI:15377"/>
        <dbReference type="ChEBI" id="CHEBI:15378"/>
        <dbReference type="ChEBI" id="CHEBI:29985"/>
        <dbReference type="ChEBI" id="CHEBI:30616"/>
        <dbReference type="ChEBI" id="CHEBI:43474"/>
        <dbReference type="ChEBI" id="CHEBI:58359"/>
        <dbReference type="ChEBI" id="CHEBI:78520"/>
        <dbReference type="ChEBI" id="CHEBI:78521"/>
        <dbReference type="ChEBI" id="CHEBI:456216"/>
    </reaction>
</comment>
<comment type="catalytic activity">
    <reaction evidence="1">
        <text>L-aspartyl-tRNA(Asn) + L-glutamine + ATP + H2O = L-asparaginyl-tRNA(Asn) + L-glutamate + ADP + phosphate + 2 H(+)</text>
        <dbReference type="Rhea" id="RHEA:14513"/>
        <dbReference type="Rhea" id="RHEA-COMP:9674"/>
        <dbReference type="Rhea" id="RHEA-COMP:9677"/>
        <dbReference type="ChEBI" id="CHEBI:15377"/>
        <dbReference type="ChEBI" id="CHEBI:15378"/>
        <dbReference type="ChEBI" id="CHEBI:29985"/>
        <dbReference type="ChEBI" id="CHEBI:30616"/>
        <dbReference type="ChEBI" id="CHEBI:43474"/>
        <dbReference type="ChEBI" id="CHEBI:58359"/>
        <dbReference type="ChEBI" id="CHEBI:78515"/>
        <dbReference type="ChEBI" id="CHEBI:78516"/>
        <dbReference type="ChEBI" id="CHEBI:456216"/>
    </reaction>
</comment>
<comment type="subunit">
    <text evidence="1">Heterotrimer of A, B and C subunits.</text>
</comment>
<comment type="similarity">
    <text evidence="1">Belongs to the GatB/GatE family. GatB subfamily.</text>
</comment>
<organism>
    <name type="scientific">Agrobacterium fabrum (strain C58 / ATCC 33970)</name>
    <name type="common">Agrobacterium tumefaciens (strain C58)</name>
    <dbReference type="NCBI Taxonomy" id="176299"/>
    <lineage>
        <taxon>Bacteria</taxon>
        <taxon>Pseudomonadati</taxon>
        <taxon>Pseudomonadota</taxon>
        <taxon>Alphaproteobacteria</taxon>
        <taxon>Hyphomicrobiales</taxon>
        <taxon>Rhizobiaceae</taxon>
        <taxon>Rhizobium/Agrobacterium group</taxon>
        <taxon>Agrobacterium</taxon>
        <taxon>Agrobacterium tumefaciens complex</taxon>
    </lineage>
</organism>
<sequence>MTLVDVRTPDPKRFIPGATGDWEIVIGLEVHAQVLSNSKLFSGASTTFGNAPNSNVSLVDAAMPGMLPVINEECVKQAVRTGLGLKAKINNRSIFDRKNYFYPDLPQGYQISQFKDPIVGEGTITISLGPDRQGNFEDIEIGIERLHLEQDAGKSMHDQHPTMSFVDLNRSGVALMEIVSKPDMRSSDEAKGYLTKLRSIVRYLGTCDGNMDEGSMRADVNVSVRRPGEGFGTRCEIKNVNSIRFVGQAIEYEARRQVAILEDGGVIDQETRLFDPGKGETRSMRSKEDAHDYRYFPDPDLLPLEFDDAFVEALKVDLPELPDDKKARFVADLGLSVYDASILVSEKAIADYYEAVAAGRDAKTAANWVINDLLGALNKFGKDIETTPVSPDQLGGIIDLIKAETISGKIAKDLFEIVWNEGGNPAEIVEARGMKQVTDTGAIEKAVDDIIAANPDQVEKVKAKPTLAGWFVGQVMKATGGKANPQAVQALVKAKLGIEDE</sequence>
<keyword id="KW-0067">ATP-binding</keyword>
<keyword id="KW-0436">Ligase</keyword>
<keyword id="KW-0547">Nucleotide-binding</keyword>
<keyword id="KW-0648">Protein biosynthesis</keyword>
<keyword id="KW-1185">Reference proteome</keyword>
<protein>
    <recommendedName>
        <fullName evidence="1">Aspartyl/glutamyl-tRNA(Asn/Gln) amidotransferase subunit B</fullName>
        <shortName evidence="1">Asp/Glu-ADT subunit B</shortName>
        <ecNumber evidence="1">6.3.5.-</ecNumber>
    </recommendedName>
</protein>
<reference key="1">
    <citation type="journal article" date="2001" name="Science">
        <title>The genome of the natural genetic engineer Agrobacterium tumefaciens C58.</title>
        <authorList>
            <person name="Wood D.W."/>
            <person name="Setubal J.C."/>
            <person name="Kaul R."/>
            <person name="Monks D.E."/>
            <person name="Kitajima J.P."/>
            <person name="Okura V.K."/>
            <person name="Zhou Y."/>
            <person name="Chen L."/>
            <person name="Wood G.E."/>
            <person name="Almeida N.F. Jr."/>
            <person name="Woo L."/>
            <person name="Chen Y."/>
            <person name="Paulsen I.T."/>
            <person name="Eisen J.A."/>
            <person name="Karp P.D."/>
            <person name="Bovee D. Sr."/>
            <person name="Chapman P."/>
            <person name="Clendenning J."/>
            <person name="Deatherage G."/>
            <person name="Gillet W."/>
            <person name="Grant C."/>
            <person name="Kutyavin T."/>
            <person name="Levy R."/>
            <person name="Li M.-J."/>
            <person name="McClelland E."/>
            <person name="Palmieri A."/>
            <person name="Raymond C."/>
            <person name="Rouse G."/>
            <person name="Saenphimmachak C."/>
            <person name="Wu Z."/>
            <person name="Romero P."/>
            <person name="Gordon D."/>
            <person name="Zhang S."/>
            <person name="Yoo H."/>
            <person name="Tao Y."/>
            <person name="Biddle P."/>
            <person name="Jung M."/>
            <person name="Krespan W."/>
            <person name="Perry M."/>
            <person name="Gordon-Kamm B."/>
            <person name="Liao L."/>
            <person name="Kim S."/>
            <person name="Hendrick C."/>
            <person name="Zhao Z.-Y."/>
            <person name="Dolan M."/>
            <person name="Chumley F."/>
            <person name="Tingey S.V."/>
            <person name="Tomb J.-F."/>
            <person name="Gordon M.P."/>
            <person name="Olson M.V."/>
            <person name="Nester E.W."/>
        </authorList>
    </citation>
    <scope>NUCLEOTIDE SEQUENCE [LARGE SCALE GENOMIC DNA]</scope>
    <source>
        <strain>C58 / ATCC 33970</strain>
    </source>
</reference>
<reference key="2">
    <citation type="journal article" date="2001" name="Science">
        <title>Genome sequence of the plant pathogen and biotechnology agent Agrobacterium tumefaciens C58.</title>
        <authorList>
            <person name="Goodner B."/>
            <person name="Hinkle G."/>
            <person name="Gattung S."/>
            <person name="Miller N."/>
            <person name="Blanchard M."/>
            <person name="Qurollo B."/>
            <person name="Goldman B.S."/>
            <person name="Cao Y."/>
            <person name="Askenazi M."/>
            <person name="Halling C."/>
            <person name="Mullin L."/>
            <person name="Houmiel K."/>
            <person name="Gordon J."/>
            <person name="Vaudin M."/>
            <person name="Iartchouk O."/>
            <person name="Epp A."/>
            <person name="Liu F."/>
            <person name="Wollam C."/>
            <person name="Allinger M."/>
            <person name="Doughty D."/>
            <person name="Scott C."/>
            <person name="Lappas C."/>
            <person name="Markelz B."/>
            <person name="Flanagan C."/>
            <person name="Crowell C."/>
            <person name="Gurson J."/>
            <person name="Lomo C."/>
            <person name="Sear C."/>
            <person name="Strub G."/>
            <person name="Cielo C."/>
            <person name="Slater S."/>
        </authorList>
    </citation>
    <scope>NUCLEOTIDE SEQUENCE [LARGE SCALE GENOMIC DNA]</scope>
    <source>
        <strain>C58 / ATCC 33970</strain>
    </source>
</reference>
<proteinExistence type="inferred from homology"/>
<gene>
    <name evidence="1" type="primary">gatB</name>
    <name type="ordered locus">Atu1324</name>
    <name type="ORF">AGR_C_2438</name>
</gene>
<feature type="chain" id="PRO_0000148755" description="Aspartyl/glutamyl-tRNA(Asn/Gln) amidotransferase subunit B">
    <location>
        <begin position="1"/>
        <end position="501"/>
    </location>
</feature>
<accession>Q8UFS3</accession>
<dbReference type="EC" id="6.3.5.-" evidence="1"/>
<dbReference type="EMBL" id="AE007869">
    <property type="protein sequence ID" value="AAK87115.2"/>
    <property type="molecule type" value="Genomic_DNA"/>
</dbReference>
<dbReference type="PIR" id="AD2739">
    <property type="entry name" value="AD2739"/>
</dbReference>
<dbReference type="PIR" id="B97520">
    <property type="entry name" value="B97520"/>
</dbReference>
<dbReference type="RefSeq" id="NP_354330.2">
    <property type="nucleotide sequence ID" value="NC_003062.2"/>
</dbReference>
<dbReference type="RefSeq" id="WP_010971544.1">
    <property type="nucleotide sequence ID" value="NC_003062.2"/>
</dbReference>
<dbReference type="SMR" id="Q8UFS3"/>
<dbReference type="STRING" id="176299.Atu1324"/>
<dbReference type="EnsemblBacteria" id="AAK87115">
    <property type="protein sequence ID" value="AAK87115"/>
    <property type="gene ID" value="Atu1324"/>
</dbReference>
<dbReference type="GeneID" id="1133362"/>
<dbReference type="KEGG" id="atu:Atu1324"/>
<dbReference type="PATRIC" id="fig|176299.10.peg.1341"/>
<dbReference type="eggNOG" id="COG0064">
    <property type="taxonomic scope" value="Bacteria"/>
</dbReference>
<dbReference type="HOGENOM" id="CLU_019240_1_1_5"/>
<dbReference type="OrthoDB" id="9804078at2"/>
<dbReference type="PhylomeDB" id="Q8UFS3"/>
<dbReference type="BioCyc" id="AGRO:ATU1324-MONOMER"/>
<dbReference type="Proteomes" id="UP000000813">
    <property type="component" value="Chromosome circular"/>
</dbReference>
<dbReference type="GO" id="GO:0050566">
    <property type="term" value="F:asparaginyl-tRNA synthase (glutamine-hydrolyzing) activity"/>
    <property type="evidence" value="ECO:0007669"/>
    <property type="project" value="RHEA"/>
</dbReference>
<dbReference type="GO" id="GO:0005524">
    <property type="term" value="F:ATP binding"/>
    <property type="evidence" value="ECO:0007669"/>
    <property type="project" value="UniProtKB-KW"/>
</dbReference>
<dbReference type="GO" id="GO:0050567">
    <property type="term" value="F:glutaminyl-tRNA synthase (glutamine-hydrolyzing) activity"/>
    <property type="evidence" value="ECO:0007669"/>
    <property type="project" value="UniProtKB-UniRule"/>
</dbReference>
<dbReference type="GO" id="GO:0070681">
    <property type="term" value="P:glutaminyl-tRNAGln biosynthesis via transamidation"/>
    <property type="evidence" value="ECO:0007669"/>
    <property type="project" value="TreeGrafter"/>
</dbReference>
<dbReference type="GO" id="GO:0006412">
    <property type="term" value="P:translation"/>
    <property type="evidence" value="ECO:0007669"/>
    <property type="project" value="UniProtKB-UniRule"/>
</dbReference>
<dbReference type="FunFam" id="1.10.10.410:FF:000001">
    <property type="entry name" value="Aspartyl/glutamyl-tRNA(Asn/Gln) amidotransferase subunit B"/>
    <property type="match status" value="1"/>
</dbReference>
<dbReference type="FunFam" id="1.10.150.380:FF:000001">
    <property type="entry name" value="Aspartyl/glutamyl-tRNA(Asn/Gln) amidotransferase subunit B"/>
    <property type="match status" value="1"/>
</dbReference>
<dbReference type="Gene3D" id="1.10.10.410">
    <property type="match status" value="1"/>
</dbReference>
<dbReference type="Gene3D" id="1.10.150.380">
    <property type="entry name" value="GatB domain, N-terminal subdomain"/>
    <property type="match status" value="1"/>
</dbReference>
<dbReference type="HAMAP" id="MF_00121">
    <property type="entry name" value="GatB"/>
    <property type="match status" value="1"/>
</dbReference>
<dbReference type="InterPro" id="IPR017959">
    <property type="entry name" value="Asn/Gln-tRNA_amidoTrfase_suB/E"/>
</dbReference>
<dbReference type="InterPro" id="IPR006075">
    <property type="entry name" value="Asn/Gln-tRNA_Trfase_suB/E_cat"/>
</dbReference>
<dbReference type="InterPro" id="IPR018027">
    <property type="entry name" value="Asn/Gln_amidotransferase"/>
</dbReference>
<dbReference type="InterPro" id="IPR003789">
    <property type="entry name" value="Asn/Gln_tRNA_amidoTrase-B-like"/>
</dbReference>
<dbReference type="InterPro" id="IPR004413">
    <property type="entry name" value="GatB"/>
</dbReference>
<dbReference type="InterPro" id="IPR042114">
    <property type="entry name" value="GatB_C_1"/>
</dbReference>
<dbReference type="InterPro" id="IPR023168">
    <property type="entry name" value="GatB_Yqey_C_2"/>
</dbReference>
<dbReference type="InterPro" id="IPR017958">
    <property type="entry name" value="Gln-tRNA_amidoTrfase_suB_CS"/>
</dbReference>
<dbReference type="InterPro" id="IPR014746">
    <property type="entry name" value="Gln_synth/guanido_kin_cat_dom"/>
</dbReference>
<dbReference type="NCBIfam" id="TIGR00133">
    <property type="entry name" value="gatB"/>
    <property type="match status" value="1"/>
</dbReference>
<dbReference type="NCBIfam" id="NF004012">
    <property type="entry name" value="PRK05477.1-2"/>
    <property type="match status" value="1"/>
</dbReference>
<dbReference type="NCBIfam" id="NF004014">
    <property type="entry name" value="PRK05477.1-4"/>
    <property type="match status" value="1"/>
</dbReference>
<dbReference type="NCBIfam" id="NF004015">
    <property type="entry name" value="PRK05477.1-5"/>
    <property type="match status" value="1"/>
</dbReference>
<dbReference type="PANTHER" id="PTHR11659">
    <property type="entry name" value="GLUTAMYL-TRNA GLN AMIDOTRANSFERASE SUBUNIT B MITOCHONDRIAL AND PROKARYOTIC PET112-RELATED"/>
    <property type="match status" value="1"/>
</dbReference>
<dbReference type="PANTHER" id="PTHR11659:SF0">
    <property type="entry name" value="GLUTAMYL-TRNA(GLN) AMIDOTRANSFERASE SUBUNIT B, MITOCHONDRIAL"/>
    <property type="match status" value="1"/>
</dbReference>
<dbReference type="Pfam" id="PF02934">
    <property type="entry name" value="GatB_N"/>
    <property type="match status" value="1"/>
</dbReference>
<dbReference type="Pfam" id="PF02637">
    <property type="entry name" value="GatB_Yqey"/>
    <property type="match status" value="1"/>
</dbReference>
<dbReference type="SMART" id="SM00845">
    <property type="entry name" value="GatB_Yqey"/>
    <property type="match status" value="1"/>
</dbReference>
<dbReference type="SUPFAM" id="SSF89095">
    <property type="entry name" value="GatB/YqeY motif"/>
    <property type="match status" value="1"/>
</dbReference>
<dbReference type="SUPFAM" id="SSF55931">
    <property type="entry name" value="Glutamine synthetase/guanido kinase"/>
    <property type="match status" value="1"/>
</dbReference>
<dbReference type="PROSITE" id="PS01234">
    <property type="entry name" value="GATB"/>
    <property type="match status" value="1"/>
</dbReference>
<evidence type="ECO:0000255" key="1">
    <source>
        <dbReference type="HAMAP-Rule" id="MF_00121"/>
    </source>
</evidence>
<name>GATB_AGRFC</name>